<protein>
    <recommendedName>
        <fullName evidence="1">DNA mismatch repair protein MutL</fullName>
    </recommendedName>
</protein>
<organism>
    <name type="scientific">Geotalea daltonii (strain DSM 22248 / JCM 15807 / FRC-32)</name>
    <name type="common">Geobacter daltonii</name>
    <dbReference type="NCBI Taxonomy" id="316067"/>
    <lineage>
        <taxon>Bacteria</taxon>
        <taxon>Pseudomonadati</taxon>
        <taxon>Thermodesulfobacteriota</taxon>
        <taxon>Desulfuromonadia</taxon>
        <taxon>Geobacterales</taxon>
        <taxon>Geobacteraceae</taxon>
        <taxon>Geotalea</taxon>
    </lineage>
</organism>
<feature type="chain" id="PRO_1000192180" description="DNA mismatch repair protein MutL">
    <location>
        <begin position="1"/>
        <end position="598"/>
    </location>
</feature>
<accession>B9M3N0</accession>
<proteinExistence type="inferred from homology"/>
<gene>
    <name evidence="1" type="primary">mutL</name>
    <name type="ordered locus">Geob_3108</name>
</gene>
<comment type="function">
    <text evidence="1">This protein is involved in the repair of mismatches in DNA. It is required for dam-dependent methyl-directed DNA mismatch repair. May act as a 'molecular matchmaker', a protein that promotes the formation of a stable complex between two or more DNA-binding proteins in an ATP-dependent manner without itself being part of a final effector complex.</text>
</comment>
<comment type="similarity">
    <text evidence="1">Belongs to the DNA mismatch repair MutL/HexB family.</text>
</comment>
<sequence>MATRIKILPEQLTNKIAAGEVVERPASVVKELVENALDAGCSEVMVEIEAGGKRLIRVSDTGCGMTREDALLALERHATSKIANDEDLFSLATLGFRGEALPSVASVSRFTLATREKGSLEGTEIYAEGGRIKEVKACGMAEGTVISVRNLFFNTPARLKFMKSSETEAGHVGDLLTRLAISRPDIRFIYTNDGKTVFRALNADLRERVATLLGRTLSQDLYPLDFCDGQLNVTGLVGKPECSRSAASHVYTYINGRFIRDKVVQHAVLQAYRNFMERGRYPVVVLFISVPAAEVDVNVHPTKHEVRFREQGRVHDAIQEAVESVLRSSPWVKTQPVVQKTQASTSIAAARIAQVRESLTQYRPQKTTQQSFKMSTPAVPASFRETSLPDPVPVADAAPAPEVERGYFSGLSVIGQFNAAYILCQDGNSLVIIDQHAAHERVAFERLKTQHAAMGVESQRLLFPETVEFSFKEGAVIREHQTELDRVGFSLEEFGGSTWLLNAVPHLLSGNDYVKTLRDILEELQSLGRSRSFQDILEDILARIACHSVVRGSHCLSQQEIKALFQQMDTTEFSSNCPHGRPVLHTLTLAEIERMFKR</sequence>
<dbReference type="EMBL" id="CP001390">
    <property type="protein sequence ID" value="ACM21451.1"/>
    <property type="molecule type" value="Genomic_DNA"/>
</dbReference>
<dbReference type="RefSeq" id="WP_012648179.1">
    <property type="nucleotide sequence ID" value="NC_011979.1"/>
</dbReference>
<dbReference type="SMR" id="B9M3N0"/>
<dbReference type="STRING" id="316067.Geob_3108"/>
<dbReference type="KEGG" id="geo:Geob_3108"/>
<dbReference type="eggNOG" id="COG0323">
    <property type="taxonomic scope" value="Bacteria"/>
</dbReference>
<dbReference type="HOGENOM" id="CLU_004131_4_2_7"/>
<dbReference type="OrthoDB" id="9763467at2"/>
<dbReference type="Proteomes" id="UP000007721">
    <property type="component" value="Chromosome"/>
</dbReference>
<dbReference type="GO" id="GO:0032300">
    <property type="term" value="C:mismatch repair complex"/>
    <property type="evidence" value="ECO:0007669"/>
    <property type="project" value="InterPro"/>
</dbReference>
<dbReference type="GO" id="GO:0005524">
    <property type="term" value="F:ATP binding"/>
    <property type="evidence" value="ECO:0007669"/>
    <property type="project" value="InterPro"/>
</dbReference>
<dbReference type="GO" id="GO:0016887">
    <property type="term" value="F:ATP hydrolysis activity"/>
    <property type="evidence" value="ECO:0007669"/>
    <property type="project" value="InterPro"/>
</dbReference>
<dbReference type="GO" id="GO:0140664">
    <property type="term" value="F:ATP-dependent DNA damage sensor activity"/>
    <property type="evidence" value="ECO:0007669"/>
    <property type="project" value="InterPro"/>
</dbReference>
<dbReference type="GO" id="GO:0030983">
    <property type="term" value="F:mismatched DNA binding"/>
    <property type="evidence" value="ECO:0007669"/>
    <property type="project" value="InterPro"/>
</dbReference>
<dbReference type="GO" id="GO:0006298">
    <property type="term" value="P:mismatch repair"/>
    <property type="evidence" value="ECO:0007669"/>
    <property type="project" value="UniProtKB-UniRule"/>
</dbReference>
<dbReference type="CDD" id="cd16926">
    <property type="entry name" value="HATPase_MutL-MLH-PMS-like"/>
    <property type="match status" value="1"/>
</dbReference>
<dbReference type="CDD" id="cd00782">
    <property type="entry name" value="MutL_Trans"/>
    <property type="match status" value="1"/>
</dbReference>
<dbReference type="FunFam" id="3.30.565.10:FF:000003">
    <property type="entry name" value="DNA mismatch repair endonuclease MutL"/>
    <property type="match status" value="1"/>
</dbReference>
<dbReference type="Gene3D" id="3.30.230.10">
    <property type="match status" value="1"/>
</dbReference>
<dbReference type="Gene3D" id="3.30.565.10">
    <property type="entry name" value="Histidine kinase-like ATPase, C-terminal domain"/>
    <property type="match status" value="1"/>
</dbReference>
<dbReference type="Gene3D" id="3.30.1540.20">
    <property type="entry name" value="MutL, C-terminal domain, dimerisation subdomain"/>
    <property type="match status" value="1"/>
</dbReference>
<dbReference type="Gene3D" id="3.30.1370.100">
    <property type="entry name" value="MutL, C-terminal domain, regulatory subdomain"/>
    <property type="match status" value="1"/>
</dbReference>
<dbReference type="HAMAP" id="MF_00149">
    <property type="entry name" value="DNA_mis_repair"/>
    <property type="match status" value="1"/>
</dbReference>
<dbReference type="InterPro" id="IPR014762">
    <property type="entry name" value="DNA_mismatch_repair_CS"/>
</dbReference>
<dbReference type="InterPro" id="IPR020667">
    <property type="entry name" value="DNA_mismatch_repair_MutL"/>
</dbReference>
<dbReference type="InterPro" id="IPR013507">
    <property type="entry name" value="DNA_mismatch_S5_2-like"/>
</dbReference>
<dbReference type="InterPro" id="IPR036890">
    <property type="entry name" value="HATPase_C_sf"/>
</dbReference>
<dbReference type="InterPro" id="IPR002099">
    <property type="entry name" value="MutL/Mlh/PMS"/>
</dbReference>
<dbReference type="InterPro" id="IPR038973">
    <property type="entry name" value="MutL/Mlh/Pms-like"/>
</dbReference>
<dbReference type="InterPro" id="IPR014790">
    <property type="entry name" value="MutL_C"/>
</dbReference>
<dbReference type="InterPro" id="IPR042120">
    <property type="entry name" value="MutL_C_dimsub"/>
</dbReference>
<dbReference type="InterPro" id="IPR042121">
    <property type="entry name" value="MutL_C_regsub"/>
</dbReference>
<dbReference type="InterPro" id="IPR037198">
    <property type="entry name" value="MutL_C_sf"/>
</dbReference>
<dbReference type="InterPro" id="IPR020568">
    <property type="entry name" value="Ribosomal_Su5_D2-typ_SF"/>
</dbReference>
<dbReference type="InterPro" id="IPR014721">
    <property type="entry name" value="Ribsml_uS5_D2-typ_fold_subgr"/>
</dbReference>
<dbReference type="NCBIfam" id="TIGR00585">
    <property type="entry name" value="mutl"/>
    <property type="match status" value="1"/>
</dbReference>
<dbReference type="PANTHER" id="PTHR10073">
    <property type="entry name" value="DNA MISMATCH REPAIR PROTEIN MLH, PMS, MUTL"/>
    <property type="match status" value="1"/>
</dbReference>
<dbReference type="PANTHER" id="PTHR10073:SF12">
    <property type="entry name" value="DNA MISMATCH REPAIR PROTEIN MLH1"/>
    <property type="match status" value="1"/>
</dbReference>
<dbReference type="Pfam" id="PF01119">
    <property type="entry name" value="DNA_mis_repair"/>
    <property type="match status" value="1"/>
</dbReference>
<dbReference type="Pfam" id="PF13589">
    <property type="entry name" value="HATPase_c_3"/>
    <property type="match status" value="1"/>
</dbReference>
<dbReference type="Pfam" id="PF08676">
    <property type="entry name" value="MutL_C"/>
    <property type="match status" value="1"/>
</dbReference>
<dbReference type="SMART" id="SM01340">
    <property type="entry name" value="DNA_mis_repair"/>
    <property type="match status" value="1"/>
</dbReference>
<dbReference type="SMART" id="SM00853">
    <property type="entry name" value="MutL_C"/>
    <property type="match status" value="1"/>
</dbReference>
<dbReference type="SUPFAM" id="SSF55874">
    <property type="entry name" value="ATPase domain of HSP90 chaperone/DNA topoisomerase II/histidine kinase"/>
    <property type="match status" value="1"/>
</dbReference>
<dbReference type="SUPFAM" id="SSF118116">
    <property type="entry name" value="DNA mismatch repair protein MutL"/>
    <property type="match status" value="1"/>
</dbReference>
<dbReference type="SUPFAM" id="SSF54211">
    <property type="entry name" value="Ribosomal protein S5 domain 2-like"/>
    <property type="match status" value="1"/>
</dbReference>
<dbReference type="PROSITE" id="PS00058">
    <property type="entry name" value="DNA_MISMATCH_REPAIR_1"/>
    <property type="match status" value="1"/>
</dbReference>
<evidence type="ECO:0000255" key="1">
    <source>
        <dbReference type="HAMAP-Rule" id="MF_00149"/>
    </source>
</evidence>
<name>MUTL_GEODF</name>
<reference key="1">
    <citation type="submission" date="2009-01" db="EMBL/GenBank/DDBJ databases">
        <title>Complete sequence of Geobacter sp. FRC-32.</title>
        <authorList>
            <consortium name="US DOE Joint Genome Institute"/>
            <person name="Lucas S."/>
            <person name="Copeland A."/>
            <person name="Lapidus A."/>
            <person name="Glavina del Rio T."/>
            <person name="Dalin E."/>
            <person name="Tice H."/>
            <person name="Bruce D."/>
            <person name="Goodwin L."/>
            <person name="Pitluck S."/>
            <person name="Saunders E."/>
            <person name="Brettin T."/>
            <person name="Detter J.C."/>
            <person name="Han C."/>
            <person name="Larimer F."/>
            <person name="Land M."/>
            <person name="Hauser L."/>
            <person name="Kyrpides N."/>
            <person name="Ovchinnikova G."/>
            <person name="Kostka J."/>
            <person name="Richardson P."/>
        </authorList>
    </citation>
    <scope>NUCLEOTIDE SEQUENCE [LARGE SCALE GENOMIC DNA]</scope>
    <source>
        <strain>DSM 22248 / JCM 15807 / FRC-32</strain>
    </source>
</reference>
<keyword id="KW-0227">DNA damage</keyword>
<keyword id="KW-0234">DNA repair</keyword>
<keyword id="KW-1185">Reference proteome</keyword>